<evidence type="ECO:0000255" key="1">
    <source>
        <dbReference type="HAMAP-Rule" id="MF_01102"/>
    </source>
</evidence>
<keyword id="KW-0963">Cytoplasm</keyword>
<keyword id="KW-0274">FAD</keyword>
<keyword id="KW-0285">Flavoprotein</keyword>
<keyword id="KW-0489">Methyltransferase</keyword>
<keyword id="KW-0511">Multifunctional enzyme</keyword>
<keyword id="KW-0560">Oxidoreductase</keyword>
<keyword id="KW-0949">S-adenosyl-L-methionine</keyword>
<keyword id="KW-0808">Transferase</keyword>
<keyword id="KW-0819">tRNA processing</keyword>
<organism>
    <name type="scientific">Burkholderia ambifaria (strain ATCC BAA-244 / DSM 16087 / CCUG 44356 / LMG 19182 / AMMD)</name>
    <name type="common">Burkholderia cepacia (strain AMMD)</name>
    <dbReference type="NCBI Taxonomy" id="339670"/>
    <lineage>
        <taxon>Bacteria</taxon>
        <taxon>Pseudomonadati</taxon>
        <taxon>Pseudomonadota</taxon>
        <taxon>Betaproteobacteria</taxon>
        <taxon>Burkholderiales</taxon>
        <taxon>Burkholderiaceae</taxon>
        <taxon>Burkholderia</taxon>
        <taxon>Burkholderia cepacia complex</taxon>
    </lineage>
</organism>
<dbReference type="EC" id="2.1.1.61" evidence="1"/>
<dbReference type="EC" id="1.5.-.-" evidence="1"/>
<dbReference type="EMBL" id="CP000440">
    <property type="protein sequence ID" value="ABI85617.1"/>
    <property type="molecule type" value="Genomic_DNA"/>
</dbReference>
<dbReference type="RefSeq" id="WP_011655589.1">
    <property type="nucleotide sequence ID" value="NC_008390.1"/>
</dbReference>
<dbReference type="SMR" id="Q0BJQ6"/>
<dbReference type="GeneID" id="93084532"/>
<dbReference type="KEGG" id="bam:Bamb_0056"/>
<dbReference type="PATRIC" id="fig|339670.21.peg.1578"/>
<dbReference type="eggNOG" id="COG0665">
    <property type="taxonomic scope" value="Bacteria"/>
</dbReference>
<dbReference type="eggNOG" id="COG4121">
    <property type="taxonomic scope" value="Bacteria"/>
</dbReference>
<dbReference type="Proteomes" id="UP000000662">
    <property type="component" value="Chromosome 1"/>
</dbReference>
<dbReference type="GO" id="GO:0005737">
    <property type="term" value="C:cytoplasm"/>
    <property type="evidence" value="ECO:0007669"/>
    <property type="project" value="UniProtKB-SubCell"/>
</dbReference>
<dbReference type="GO" id="GO:0050660">
    <property type="term" value="F:flavin adenine dinucleotide binding"/>
    <property type="evidence" value="ECO:0007669"/>
    <property type="project" value="UniProtKB-UniRule"/>
</dbReference>
<dbReference type="GO" id="GO:0016645">
    <property type="term" value="F:oxidoreductase activity, acting on the CH-NH group of donors"/>
    <property type="evidence" value="ECO:0007669"/>
    <property type="project" value="InterPro"/>
</dbReference>
<dbReference type="GO" id="GO:0004808">
    <property type="term" value="F:tRNA (5-methylaminomethyl-2-thiouridylate)(34)-methyltransferase activity"/>
    <property type="evidence" value="ECO:0007669"/>
    <property type="project" value="UniProtKB-EC"/>
</dbReference>
<dbReference type="GO" id="GO:0032259">
    <property type="term" value="P:methylation"/>
    <property type="evidence" value="ECO:0007669"/>
    <property type="project" value="UniProtKB-KW"/>
</dbReference>
<dbReference type="GO" id="GO:0002097">
    <property type="term" value="P:tRNA wobble base modification"/>
    <property type="evidence" value="ECO:0007669"/>
    <property type="project" value="UniProtKB-UniRule"/>
</dbReference>
<dbReference type="Gene3D" id="3.30.9.10">
    <property type="entry name" value="D-Amino Acid Oxidase, subunit A, domain 2"/>
    <property type="match status" value="1"/>
</dbReference>
<dbReference type="Gene3D" id="3.50.50.60">
    <property type="entry name" value="FAD/NAD(P)-binding domain"/>
    <property type="match status" value="1"/>
</dbReference>
<dbReference type="Gene3D" id="3.40.50.150">
    <property type="entry name" value="Vaccinia Virus protein VP39"/>
    <property type="match status" value="1"/>
</dbReference>
<dbReference type="HAMAP" id="MF_01102">
    <property type="entry name" value="MnmC"/>
    <property type="match status" value="1"/>
</dbReference>
<dbReference type="InterPro" id="IPR006076">
    <property type="entry name" value="FAD-dep_OxRdtase"/>
</dbReference>
<dbReference type="InterPro" id="IPR036188">
    <property type="entry name" value="FAD/NAD-bd_sf"/>
</dbReference>
<dbReference type="InterPro" id="IPR008471">
    <property type="entry name" value="MnmC-like_methylTransf"/>
</dbReference>
<dbReference type="InterPro" id="IPR029063">
    <property type="entry name" value="SAM-dependent_MTases_sf"/>
</dbReference>
<dbReference type="InterPro" id="IPR023032">
    <property type="entry name" value="tRNA_MAMT_biosynth_bifunc_MnmC"/>
</dbReference>
<dbReference type="InterPro" id="IPR017610">
    <property type="entry name" value="tRNA_S-uridine_synth_MnmC_C"/>
</dbReference>
<dbReference type="NCBIfam" id="TIGR03197">
    <property type="entry name" value="MnmC_Cterm"/>
    <property type="match status" value="1"/>
</dbReference>
<dbReference type="NCBIfam" id="NF002483">
    <property type="entry name" value="PRK01747.1-4"/>
    <property type="match status" value="1"/>
</dbReference>
<dbReference type="PANTHER" id="PTHR13847">
    <property type="entry name" value="SARCOSINE DEHYDROGENASE-RELATED"/>
    <property type="match status" value="1"/>
</dbReference>
<dbReference type="PANTHER" id="PTHR13847:SF283">
    <property type="entry name" value="TRNA 5-METHYLAMINOMETHYL-2-THIOURIDINE BIOSYNTHESIS BIFUNCTIONAL PROTEIN MNMC"/>
    <property type="match status" value="1"/>
</dbReference>
<dbReference type="Pfam" id="PF01266">
    <property type="entry name" value="DAO"/>
    <property type="match status" value="1"/>
</dbReference>
<dbReference type="Pfam" id="PF05430">
    <property type="entry name" value="Methyltransf_30"/>
    <property type="match status" value="1"/>
</dbReference>
<dbReference type="SUPFAM" id="SSF54373">
    <property type="entry name" value="FAD-linked reductases, C-terminal domain"/>
    <property type="match status" value="1"/>
</dbReference>
<dbReference type="SUPFAM" id="SSF51905">
    <property type="entry name" value="FAD/NAD(P)-binding domain"/>
    <property type="match status" value="1"/>
</dbReference>
<reference key="1">
    <citation type="submission" date="2006-08" db="EMBL/GenBank/DDBJ databases">
        <title>Complete sequence of chromosome 1 of Burkholderia cepacia AMMD.</title>
        <authorList>
            <person name="Copeland A."/>
            <person name="Lucas S."/>
            <person name="Lapidus A."/>
            <person name="Barry K."/>
            <person name="Detter J.C."/>
            <person name="Glavina del Rio T."/>
            <person name="Hammon N."/>
            <person name="Israni S."/>
            <person name="Pitluck S."/>
            <person name="Bruce D."/>
            <person name="Chain P."/>
            <person name="Malfatti S."/>
            <person name="Shin M."/>
            <person name="Vergez L."/>
            <person name="Schmutz J."/>
            <person name="Larimer F."/>
            <person name="Land M."/>
            <person name="Hauser L."/>
            <person name="Kyrpides N."/>
            <person name="Kim E."/>
            <person name="Parke J."/>
            <person name="Coenye T."/>
            <person name="Konstantinidis K."/>
            <person name="Ramette A."/>
            <person name="Tiedje J."/>
            <person name="Richardson P."/>
        </authorList>
    </citation>
    <scope>NUCLEOTIDE SEQUENCE [LARGE SCALE GENOMIC DNA]</scope>
    <source>
        <strain>ATCC BAA-244 / DSM 16087 / CCUG 44356 / LMG 19182 / AMMD</strain>
    </source>
</reference>
<feature type="chain" id="PRO_0000347947" description="tRNA 5-methylaminomethyl-2-thiouridine biosynthesis bifunctional protein MnmC">
    <location>
        <begin position="1"/>
        <end position="652"/>
    </location>
</feature>
<feature type="region of interest" description="tRNA (mnm(5)s(2)U34)-methyltransferase">
    <location>
        <begin position="1"/>
        <end position="235"/>
    </location>
</feature>
<feature type="region of interest" description="FAD-dependent cmnm(5)s(2)U34 oxidoreductase">
    <location>
        <begin position="259"/>
        <end position="652"/>
    </location>
</feature>
<name>MNMC_BURCM</name>
<gene>
    <name evidence="1" type="primary">mnmC</name>
    <name type="ordered locus">Bamb_0056</name>
</gene>
<comment type="function">
    <text evidence="1">Catalyzes the last two steps in the biosynthesis of 5-methylaminomethyl-2-thiouridine (mnm(5)s(2)U) at the wobble position (U34) in tRNA. Catalyzes the FAD-dependent demodification of cmnm(5)s(2)U34 to nm(5)s(2)U34, followed by the transfer of a methyl group from S-adenosyl-L-methionine to nm(5)s(2)U34, to form mnm(5)s(2)U34.</text>
</comment>
<comment type="catalytic activity">
    <reaction evidence="1">
        <text>5-aminomethyl-2-thiouridine(34) in tRNA + S-adenosyl-L-methionine = 5-methylaminomethyl-2-thiouridine(34) in tRNA + S-adenosyl-L-homocysteine + H(+)</text>
        <dbReference type="Rhea" id="RHEA:19569"/>
        <dbReference type="Rhea" id="RHEA-COMP:10195"/>
        <dbReference type="Rhea" id="RHEA-COMP:10197"/>
        <dbReference type="ChEBI" id="CHEBI:15378"/>
        <dbReference type="ChEBI" id="CHEBI:57856"/>
        <dbReference type="ChEBI" id="CHEBI:59789"/>
        <dbReference type="ChEBI" id="CHEBI:74454"/>
        <dbReference type="ChEBI" id="CHEBI:74455"/>
        <dbReference type="EC" id="2.1.1.61"/>
    </reaction>
</comment>
<comment type="cofactor">
    <cofactor evidence="1">
        <name>FAD</name>
        <dbReference type="ChEBI" id="CHEBI:57692"/>
    </cofactor>
</comment>
<comment type="subcellular location">
    <subcellularLocation>
        <location evidence="1">Cytoplasm</location>
    </subcellularLocation>
</comment>
<comment type="similarity">
    <text evidence="1">In the N-terminal section; belongs to the methyltransferase superfamily. tRNA (mnm(5)s(2)U34)-methyltransferase family.</text>
</comment>
<comment type="similarity">
    <text evidence="1">In the C-terminal section; belongs to the DAO family.</text>
</comment>
<sequence length="652" mass="69971">MPDRLVPATLARRDDGILVSPEYGELPRDASRARAHANRMLAGTGLLARWQGRRTFTIVETGFGTGGRFLATWAAWRDDPARCERLHFVAIEAHPFTREDLRRAVSHLVADTTISENADALIDAWPMHVPGLHRLEFDAGRVVLTLAFGDARDMLQRLVARADAFYLGNVASAAHGDVLSADVIRALARIAADGATYATHSHDDTVKHALEQTGFTSRDVEDCAGEPALRVGEYAPRWRMRRHEPPRALPVAAREAIVIGAGLAGCAVVERLAARGWNITLIERHERIASEASGNPAGVFHPLMTRDDNVASRLTRSGFLHALARWRALEDAGHAFARSTRGMIHLAESADDFARMRDAFDALGAPSDYVSLLDTDAARAHLNLPVAHGGLLFPHGGAVWPAGVCAAQIAAAGERVTLLAGTEVARLERDRDIWRAVDAAGATLAEAPVVVLANAGDAVRLAGLRHVALQPVRGQLTLLPPGSTAPLPCPTIGDGYAVPLDDGTLLIGATFEPDDVDRTMRTVGHIENLARVRHLLPGLIGELPDVDTLRGRVAFRWVVADRVPVIGPLADEAQAVANARALSGAKARDLPRTAGLYGAFGYGSRGLVWAALGAELIASQLEGEPLPLERELVDAVDPARFLIRALRGRQIG</sequence>
<proteinExistence type="inferred from homology"/>
<accession>Q0BJQ6</accession>
<protein>
    <recommendedName>
        <fullName evidence="1">tRNA 5-methylaminomethyl-2-thiouridine biosynthesis bifunctional protein MnmC</fullName>
        <shortName evidence="1">tRNA mnm(5)s(2)U biosynthesis bifunctional protein</shortName>
    </recommendedName>
    <domain>
        <recommendedName>
            <fullName evidence="1">tRNA (mnm(5)s(2)U34)-methyltransferase</fullName>
            <ecNumber evidence="1">2.1.1.61</ecNumber>
        </recommendedName>
    </domain>
    <domain>
        <recommendedName>
            <fullName evidence="1">FAD-dependent cmnm(5)s(2)U34 oxidoreductase</fullName>
            <ecNumber evidence="1">1.5.-.-</ecNumber>
        </recommendedName>
    </domain>
</protein>